<sequence length="197" mass="21485">MHEEITGIILAGGRATRMGGEDKGLIQIAGIPLYQYVLSRLRPQVSLMAISANRNQARYGESGLPIVSDLTPDFSGPLAGMLAGLKHAATEWVVFVPCDVPDFPATLVDQLWQQKGSSLAAYASDGERAHPTLALLHTSLAPQLKEYLARGERKLMLFLDAAGARKIAFSGQQAAFHNLNTREDCLRWQQEKGLTNE</sequence>
<proteinExistence type="inferred from homology"/>
<reference key="1">
    <citation type="submission" date="2007-09" db="EMBL/GenBank/DDBJ databases">
        <title>Complete sequence of chromosome of Serratia proteamaculans 568.</title>
        <authorList>
            <consortium name="US DOE Joint Genome Institute"/>
            <person name="Copeland A."/>
            <person name="Lucas S."/>
            <person name="Lapidus A."/>
            <person name="Barry K."/>
            <person name="Glavina del Rio T."/>
            <person name="Dalin E."/>
            <person name="Tice H."/>
            <person name="Pitluck S."/>
            <person name="Chain P."/>
            <person name="Malfatti S."/>
            <person name="Shin M."/>
            <person name="Vergez L."/>
            <person name="Schmutz J."/>
            <person name="Larimer F."/>
            <person name="Land M."/>
            <person name="Hauser L."/>
            <person name="Kyrpides N."/>
            <person name="Kim E."/>
            <person name="Taghavi S."/>
            <person name="Newman L."/>
            <person name="Vangronsveld J."/>
            <person name="van der Lelie D."/>
            <person name="Richardson P."/>
        </authorList>
    </citation>
    <scope>NUCLEOTIDE SEQUENCE [LARGE SCALE GENOMIC DNA]</scope>
    <source>
        <strain>568</strain>
    </source>
</reference>
<protein>
    <recommendedName>
        <fullName evidence="1">Molybdenum cofactor guanylyltransferase</fullName>
        <shortName evidence="1">MoCo guanylyltransferase</shortName>
        <ecNumber evidence="1">2.7.7.77</ecNumber>
    </recommendedName>
    <alternativeName>
        <fullName evidence="1">GTP:molybdopterin guanylyltransferase</fullName>
    </alternativeName>
    <alternativeName>
        <fullName evidence="1">Mo-MPT guanylyltransferase</fullName>
    </alternativeName>
    <alternativeName>
        <fullName evidence="1">Molybdopterin guanylyltransferase</fullName>
    </alternativeName>
    <alternativeName>
        <fullName evidence="1">Molybdopterin-guanine dinucleotide synthase</fullName>
        <shortName evidence="1">MGD synthase</shortName>
    </alternativeName>
</protein>
<comment type="function">
    <text evidence="1">Transfers a GMP moiety from GTP to Mo-molybdopterin (Mo-MPT) cofactor (Moco or molybdenum cofactor) to form Mo-molybdopterin guanine dinucleotide (Mo-MGD) cofactor.</text>
</comment>
<comment type="catalytic activity">
    <reaction evidence="1">
        <text>Mo-molybdopterin + GTP + H(+) = Mo-molybdopterin guanine dinucleotide + diphosphate</text>
        <dbReference type="Rhea" id="RHEA:34243"/>
        <dbReference type="ChEBI" id="CHEBI:15378"/>
        <dbReference type="ChEBI" id="CHEBI:33019"/>
        <dbReference type="ChEBI" id="CHEBI:37565"/>
        <dbReference type="ChEBI" id="CHEBI:71302"/>
        <dbReference type="ChEBI" id="CHEBI:71310"/>
        <dbReference type="EC" id="2.7.7.77"/>
    </reaction>
</comment>
<comment type="cofactor">
    <cofactor evidence="1">
        <name>Mg(2+)</name>
        <dbReference type="ChEBI" id="CHEBI:18420"/>
    </cofactor>
</comment>
<comment type="subunit">
    <text evidence="1">Monomer.</text>
</comment>
<comment type="subcellular location">
    <subcellularLocation>
        <location evidence="1">Cytoplasm</location>
    </subcellularLocation>
</comment>
<comment type="domain">
    <text evidence="1">The N-terminal domain determines nucleotide recognition and specific binding, while the C-terminal domain determines the specific binding to the target protein.</text>
</comment>
<comment type="similarity">
    <text evidence="1">Belongs to the MobA family.</text>
</comment>
<gene>
    <name evidence="1" type="primary">mobA</name>
    <name type="ordered locus">Spro_4892</name>
</gene>
<keyword id="KW-0963">Cytoplasm</keyword>
<keyword id="KW-0342">GTP-binding</keyword>
<keyword id="KW-0460">Magnesium</keyword>
<keyword id="KW-0479">Metal-binding</keyword>
<keyword id="KW-0501">Molybdenum cofactor biosynthesis</keyword>
<keyword id="KW-0547">Nucleotide-binding</keyword>
<keyword id="KW-0808">Transferase</keyword>
<dbReference type="EC" id="2.7.7.77" evidence="1"/>
<dbReference type="EMBL" id="CP000826">
    <property type="protein sequence ID" value="ABV43984.1"/>
    <property type="molecule type" value="Genomic_DNA"/>
</dbReference>
<dbReference type="SMR" id="A8GLJ4"/>
<dbReference type="STRING" id="399741.Spro_4892"/>
<dbReference type="KEGG" id="spe:Spro_4892"/>
<dbReference type="eggNOG" id="COG0746">
    <property type="taxonomic scope" value="Bacteria"/>
</dbReference>
<dbReference type="HOGENOM" id="CLU_055597_5_1_6"/>
<dbReference type="OrthoDB" id="9788394at2"/>
<dbReference type="GO" id="GO:0005737">
    <property type="term" value="C:cytoplasm"/>
    <property type="evidence" value="ECO:0007669"/>
    <property type="project" value="UniProtKB-SubCell"/>
</dbReference>
<dbReference type="GO" id="GO:0005525">
    <property type="term" value="F:GTP binding"/>
    <property type="evidence" value="ECO:0007669"/>
    <property type="project" value="UniProtKB-UniRule"/>
</dbReference>
<dbReference type="GO" id="GO:0046872">
    <property type="term" value="F:metal ion binding"/>
    <property type="evidence" value="ECO:0007669"/>
    <property type="project" value="UniProtKB-KW"/>
</dbReference>
<dbReference type="GO" id="GO:0061603">
    <property type="term" value="F:molybdenum cofactor guanylyltransferase activity"/>
    <property type="evidence" value="ECO:0007669"/>
    <property type="project" value="UniProtKB-EC"/>
</dbReference>
<dbReference type="GO" id="GO:1902758">
    <property type="term" value="P:bis(molybdopterin guanine dinucleotide)molybdenum biosynthetic process"/>
    <property type="evidence" value="ECO:0007669"/>
    <property type="project" value="TreeGrafter"/>
</dbReference>
<dbReference type="CDD" id="cd02503">
    <property type="entry name" value="MobA"/>
    <property type="match status" value="1"/>
</dbReference>
<dbReference type="Gene3D" id="3.90.550.10">
    <property type="entry name" value="Spore Coat Polysaccharide Biosynthesis Protein SpsA, Chain A"/>
    <property type="match status" value="1"/>
</dbReference>
<dbReference type="HAMAP" id="MF_00316">
    <property type="entry name" value="MobA"/>
    <property type="match status" value="1"/>
</dbReference>
<dbReference type="InterPro" id="IPR025877">
    <property type="entry name" value="MobA-like_NTP_Trfase"/>
</dbReference>
<dbReference type="InterPro" id="IPR013482">
    <property type="entry name" value="Molybde_CF_guanTrfase"/>
</dbReference>
<dbReference type="InterPro" id="IPR029044">
    <property type="entry name" value="Nucleotide-diphossugar_trans"/>
</dbReference>
<dbReference type="NCBIfam" id="TIGR02665">
    <property type="entry name" value="molyb_mobA"/>
    <property type="match status" value="1"/>
</dbReference>
<dbReference type="PANTHER" id="PTHR19136">
    <property type="entry name" value="MOLYBDENUM COFACTOR GUANYLYLTRANSFERASE"/>
    <property type="match status" value="1"/>
</dbReference>
<dbReference type="PANTHER" id="PTHR19136:SF81">
    <property type="entry name" value="MOLYBDENUM COFACTOR GUANYLYLTRANSFERASE"/>
    <property type="match status" value="1"/>
</dbReference>
<dbReference type="Pfam" id="PF12804">
    <property type="entry name" value="NTP_transf_3"/>
    <property type="match status" value="1"/>
</dbReference>
<dbReference type="SUPFAM" id="SSF53448">
    <property type="entry name" value="Nucleotide-diphospho-sugar transferases"/>
    <property type="match status" value="1"/>
</dbReference>
<evidence type="ECO:0000255" key="1">
    <source>
        <dbReference type="HAMAP-Rule" id="MF_00316"/>
    </source>
</evidence>
<feature type="chain" id="PRO_1000059451" description="Molybdenum cofactor guanylyltransferase">
    <location>
        <begin position="1"/>
        <end position="197"/>
    </location>
</feature>
<feature type="binding site" evidence="1">
    <location>
        <begin position="10"/>
        <end position="12"/>
    </location>
    <ligand>
        <name>GTP</name>
        <dbReference type="ChEBI" id="CHEBI:37565"/>
    </ligand>
</feature>
<feature type="binding site" evidence="1">
    <location>
        <position position="23"/>
    </location>
    <ligand>
        <name>GTP</name>
        <dbReference type="ChEBI" id="CHEBI:37565"/>
    </ligand>
</feature>
<feature type="binding site" evidence="1">
    <location>
        <position position="69"/>
    </location>
    <ligand>
        <name>GTP</name>
        <dbReference type="ChEBI" id="CHEBI:37565"/>
    </ligand>
</feature>
<feature type="binding site" evidence="1">
    <location>
        <position position="99"/>
    </location>
    <ligand>
        <name>GTP</name>
        <dbReference type="ChEBI" id="CHEBI:37565"/>
    </ligand>
</feature>
<feature type="binding site" evidence="1">
    <location>
        <position position="99"/>
    </location>
    <ligand>
        <name>Mg(2+)</name>
        <dbReference type="ChEBI" id="CHEBI:18420"/>
    </ligand>
</feature>
<accession>A8GLJ4</accession>
<organism>
    <name type="scientific">Serratia proteamaculans (strain 568)</name>
    <dbReference type="NCBI Taxonomy" id="399741"/>
    <lineage>
        <taxon>Bacteria</taxon>
        <taxon>Pseudomonadati</taxon>
        <taxon>Pseudomonadota</taxon>
        <taxon>Gammaproteobacteria</taxon>
        <taxon>Enterobacterales</taxon>
        <taxon>Yersiniaceae</taxon>
        <taxon>Serratia</taxon>
    </lineage>
</organism>
<name>MOBA_SERP5</name>